<keyword id="KW-0677">Repeat</keyword>
<keyword id="KW-0853">WD repeat</keyword>
<organism>
    <name type="scientific">Drosophila yakuba</name>
    <name type="common">Fruit fly</name>
    <dbReference type="NCBI Taxonomy" id="7245"/>
    <lineage>
        <taxon>Eukaryota</taxon>
        <taxon>Metazoa</taxon>
        <taxon>Ecdysozoa</taxon>
        <taxon>Arthropoda</taxon>
        <taxon>Hexapoda</taxon>
        <taxon>Insecta</taxon>
        <taxon>Pterygota</taxon>
        <taxon>Neoptera</taxon>
        <taxon>Endopterygota</taxon>
        <taxon>Diptera</taxon>
        <taxon>Brachycera</taxon>
        <taxon>Muscomorpha</taxon>
        <taxon>Ephydroidea</taxon>
        <taxon>Drosophilidae</taxon>
        <taxon>Drosophila</taxon>
        <taxon>Sophophora</taxon>
    </lineage>
</organism>
<evidence type="ECO:0000255" key="1"/>
<evidence type="ECO:0000256" key="2">
    <source>
        <dbReference type="SAM" id="MobiDB-lite"/>
    </source>
</evidence>
<evidence type="ECO:0000269" key="3">
    <source>
    </source>
</evidence>
<evidence type="ECO:0000303" key="4">
    <source>
    </source>
</evidence>
<evidence type="ECO:0000305" key="5"/>
<evidence type="ECO:0000312" key="6">
    <source>
        <dbReference type="EMBL" id="DAA06446.1"/>
    </source>
</evidence>
<sequence>MSVILNASVNTKSAVEYRTISSTQSHLAEEQSERLHKWISKDQLEKLHAAFLNTPERHVGIDELRIILEELDITFNDSMYTRLFLKINQNRDFKVDWNEFVSYLIFGFQEEDPSSQKESLILPISGPPMVRKSEHRSAICCLALLKAKSDQVPIDEVTETINFSFGGEDSPEASGMWVTASHEGMMRFWTSHMEPIRTASSESIVSTYAFYNNGKVHSKLILGDYAGNVRILSYSPHLRGPFQAKPGAALIEVIWSDVLKGKIPQFFPKEYINLHNEMISCVYFSLHMNALFASAEYRNTKKYRGRCPGMIMVNYDERSNFRIPLGVSTFFVAESHNIVVTGGPDTFVRIWDVYIPTEPSAILTGHNGGIVLVFVQPEENKVYSVDYQKIIKVWDLHEHTLLQTYGDLVRLIHHSETDMTYYYHSHLQELVVAGRKLISIKCCPRVRVDLADGNTHAAPVSVVLYNRLFRNVVSCGLDSYIIVWDPWTGRRKIIMKSCHTKMIYGEIIDIEITAACFDPLEQFLLTGARDGSLKIWNYNNAVVVRNMSIMPDQEVTAVIWVVDRILPMGWDWQVTEFNDVVGREYGDPKKWPKFHTDDITCADVKLGEGVVTATYSGEIIFWKLETGQPYRRYSVMDPTRFIELKLTAEEEKFIRQSKRLASRPTPGNHGLQMGRAGRSTVLNRPEDNRDYGTDIPISVQAVLFLQTRPQTLKHGSVFISLDTGFIQVYSHHQRGGYMVEFLAVHKTGDCVLTMCTDRKNRYLYTGTAFGYIKVWHIENFCVPETEKIHVCMPKLRLEFIFLRKELFLTRAKRAVRNQAEPLLVSSYKGHLKAINSISFINLPKIIFTGSHDYSCRLWTQGGRYLGTLGTVLPWSKLTPFERAGNDNHLYRMPPDIKKVASSTTLKVISGIQAETRIKISDGKPVEDREEDTAQTEDVTELRKLLDKPVKEPILGKHFELPGRSVLDQHIELDTTQSYIAVFTQLKVHSTEMLERLPTPAVVSRVQTENYLDHYIPVEGKVDVSGSAINIKQPSRRRSDKTNDTRNVRTPRARDLIALEMSSSHASQS</sequence>
<dbReference type="EMBL" id="BK006450">
    <property type="protein sequence ID" value="DAA06446.1"/>
    <property type="molecule type" value="Genomic_DNA"/>
</dbReference>
<dbReference type="EMBL" id="AAEU02004787">
    <property type="status" value="NOT_ANNOTATED_CDS"/>
    <property type="molecule type" value="Genomic_DNA"/>
</dbReference>
<dbReference type="EMBL" id="AAEU02008933">
    <property type="status" value="NOT_ANNOTATED_CDS"/>
    <property type="molecule type" value="Genomic_DNA"/>
</dbReference>
<dbReference type="EMBL" id="AAEU02010905">
    <property type="status" value="NOT_ANNOTATED_CDS"/>
    <property type="molecule type" value="Genomic_DNA"/>
</dbReference>
<dbReference type="EMBL" id="EU362856">
    <property type="protein sequence ID" value="ABY59795.1"/>
    <property type="molecule type" value="mRNA"/>
</dbReference>
<dbReference type="EnsemblMetazoa" id="FBtr0396545">
    <property type="protein sequence ID" value="FBpp0355729"/>
    <property type="gene ID" value="FBgn0276259"/>
</dbReference>
<dbReference type="EnsemblMetazoa" id="FBtr0406073">
    <property type="protein sequence ID" value="FBpp0364669"/>
    <property type="gene ID" value="FBgn0276869"/>
</dbReference>
<dbReference type="OrthoDB" id="5980302at2759"/>
<dbReference type="ChiTaRS" id="WDY">
    <property type="organism name" value="fly"/>
</dbReference>
<dbReference type="Gene3D" id="2.130.10.10">
    <property type="entry name" value="YVTN repeat-like/Quinoprotein amine dehydrogenase"/>
    <property type="match status" value="3"/>
</dbReference>
<dbReference type="InterPro" id="IPR011992">
    <property type="entry name" value="EF-hand-dom_pair"/>
</dbReference>
<dbReference type="InterPro" id="IPR051242">
    <property type="entry name" value="WD-EF-hand_domain"/>
</dbReference>
<dbReference type="InterPro" id="IPR015943">
    <property type="entry name" value="WD40/YVTN_repeat-like_dom_sf"/>
</dbReference>
<dbReference type="InterPro" id="IPR036322">
    <property type="entry name" value="WD40_repeat_dom_sf"/>
</dbReference>
<dbReference type="InterPro" id="IPR001680">
    <property type="entry name" value="WD40_rpt"/>
</dbReference>
<dbReference type="PANTHER" id="PTHR44324:SF6">
    <property type="entry name" value="EF-HAND CALCIUM BINDING DOMAIN 8"/>
    <property type="match status" value="1"/>
</dbReference>
<dbReference type="PANTHER" id="PTHR44324">
    <property type="entry name" value="WD40 REPEAT DOMAIN 95"/>
    <property type="match status" value="1"/>
</dbReference>
<dbReference type="Pfam" id="PF00400">
    <property type="entry name" value="WD40"/>
    <property type="match status" value="2"/>
</dbReference>
<dbReference type="SMART" id="SM00320">
    <property type="entry name" value="WD40"/>
    <property type="match status" value="8"/>
</dbReference>
<dbReference type="SUPFAM" id="SSF47473">
    <property type="entry name" value="EF-hand"/>
    <property type="match status" value="1"/>
</dbReference>
<dbReference type="SUPFAM" id="SSF50978">
    <property type="entry name" value="WD40 repeat-like"/>
    <property type="match status" value="2"/>
</dbReference>
<dbReference type="PROSITE" id="PS00678">
    <property type="entry name" value="WD_REPEATS_1"/>
    <property type="match status" value="1"/>
</dbReference>
<dbReference type="PROSITE" id="PS50082">
    <property type="entry name" value="WD_REPEATS_2"/>
    <property type="match status" value="4"/>
</dbReference>
<dbReference type="PROSITE" id="PS50294">
    <property type="entry name" value="WD_REPEATS_REGION"/>
    <property type="match status" value="2"/>
</dbReference>
<name>WDY_DROYA</name>
<protein>
    <recommendedName>
        <fullName evidence="4 6">WD repeat-containing protein on Y chromosome</fullName>
        <shortName evidence="4">WD40 Y</shortName>
    </recommendedName>
</protein>
<accession>B7FF12</accession>
<accession>B0FXQ6</accession>
<proteinExistence type="evidence at transcript level"/>
<gene>
    <name evidence="6" type="primary">WDY</name>
</gene>
<feature type="chain" id="PRO_0000377425" description="WD repeat-containing protein on Y chromosome">
    <location>
        <begin position="1"/>
        <end position="1068"/>
    </location>
</feature>
<feature type="repeat" description="WD 1" evidence="1">
    <location>
        <begin position="155"/>
        <end position="199"/>
    </location>
</feature>
<feature type="repeat" description="WD 2" evidence="1">
    <location>
        <begin position="201"/>
        <end position="242"/>
    </location>
</feature>
<feature type="repeat" description="WD 3" evidence="1">
    <location>
        <begin position="322"/>
        <end position="361"/>
    </location>
</feature>
<feature type="repeat" description="WD 4" evidence="1">
    <location>
        <begin position="365"/>
        <end position="404"/>
    </location>
</feature>
<feature type="repeat" description="WD 5" evidence="1">
    <location>
        <begin position="455"/>
        <end position="494"/>
    </location>
</feature>
<feature type="repeat" description="WD 6" evidence="1">
    <location>
        <begin position="507"/>
        <end position="546"/>
    </location>
</feature>
<feature type="repeat" description="WD 7" evidence="1">
    <location>
        <begin position="594"/>
        <end position="634"/>
    </location>
</feature>
<feature type="repeat" description="WD 8" evidence="1">
    <location>
        <begin position="746"/>
        <end position="785"/>
    </location>
</feature>
<feature type="repeat" description="WD 9" evidence="1">
    <location>
        <begin position="829"/>
        <end position="868"/>
    </location>
</feature>
<feature type="region of interest" description="Disordered" evidence="2">
    <location>
        <begin position="657"/>
        <end position="687"/>
    </location>
</feature>
<feature type="region of interest" description="Disordered" evidence="2">
    <location>
        <begin position="1026"/>
        <end position="1068"/>
    </location>
</feature>
<feature type="compositionally biased region" description="Basic and acidic residues" evidence="2">
    <location>
        <begin position="1039"/>
        <end position="1056"/>
    </location>
</feature>
<reference evidence="5" key="1">
    <citation type="journal article" date="2007" name="Nature">
        <title>Evolution of genes and genomes on the Drosophila phylogeny.</title>
        <authorList>
            <consortium name="Drosophila 12 genomes consortium"/>
        </authorList>
    </citation>
    <scope>NUCLEOTIDE SEQUENCE [LARGE SCALE GENOMIC DNA]</scope>
    <source>
        <strain evidence="3">Tai18E2 / Tucson 14021-0261.01</strain>
    </source>
</reference>
<reference evidence="5 6" key="2">
    <citation type="journal article" date="2008" name="Nature">
        <title>Low conservation of gene content in the Drosophila Y chromosome.</title>
        <authorList>
            <person name="Koerich L.B."/>
            <person name="Wang X."/>
            <person name="Clark A.G."/>
            <person name="Carvalho A.B."/>
        </authorList>
    </citation>
    <scope>IDENTIFICATION</scope>
    <scope>NUCLEOTIDE SEQUENCE [MRNA] OF 79-1068</scope>
</reference>